<keyword id="KW-0002">3D-structure</keyword>
<keyword id="KW-0012">Acyltransferase</keyword>
<keyword id="KW-0025">Alternative splicing</keyword>
<keyword id="KW-1015">Disulfide bond</keyword>
<keyword id="KW-0479">Metal-binding</keyword>
<keyword id="KW-0496">Mitochondrion</keyword>
<keyword id="KW-1185">Reference proteome</keyword>
<keyword id="KW-0964">Secreted</keyword>
<keyword id="KW-0808">Transferase</keyword>
<keyword id="KW-0809">Transit peptide</keyword>
<keyword id="KW-0862">Zinc</keyword>
<name>QPCT2_DROME</name>
<organism evidence="12">
    <name type="scientific">Drosophila melanogaster</name>
    <name type="common">Fruit fly</name>
    <dbReference type="NCBI Taxonomy" id="7227"/>
    <lineage>
        <taxon>Eukaryota</taxon>
        <taxon>Metazoa</taxon>
        <taxon>Ecdysozoa</taxon>
        <taxon>Arthropoda</taxon>
        <taxon>Hexapoda</taxon>
        <taxon>Insecta</taxon>
        <taxon>Pterygota</taxon>
        <taxon>Neoptera</taxon>
        <taxon>Endopterygota</taxon>
        <taxon>Diptera</taxon>
        <taxon>Brachycera</taxon>
        <taxon>Muscomorpha</taxon>
        <taxon>Ephydroidea</taxon>
        <taxon>Drosophilidae</taxon>
        <taxon>Drosophila</taxon>
        <taxon>Sophophora</taxon>
    </lineage>
</organism>
<proteinExistence type="evidence at protein level"/>
<protein>
    <recommendedName>
        <fullName evidence="8">Glutaminyl-peptide cyclotransferase</fullName>
        <ecNumber evidence="4 5">2.3.2.5</ecNumber>
    </recommendedName>
    <alternativeName>
        <fullName evidence="7 11">Iso glutaminyl cyclase</fullName>
    </alternativeName>
</protein>
<reference evidence="12" key="1">
    <citation type="journal article" date="2000" name="Science">
        <title>The genome sequence of Drosophila melanogaster.</title>
        <authorList>
            <person name="Adams M.D."/>
            <person name="Celniker S.E."/>
            <person name="Holt R.A."/>
            <person name="Evans C.A."/>
            <person name="Gocayne J.D."/>
            <person name="Amanatides P.G."/>
            <person name="Scherer S.E."/>
            <person name="Li P.W."/>
            <person name="Hoskins R.A."/>
            <person name="Galle R.F."/>
            <person name="George R.A."/>
            <person name="Lewis S.E."/>
            <person name="Richards S."/>
            <person name="Ashburner M."/>
            <person name="Henderson S.N."/>
            <person name="Sutton G.G."/>
            <person name="Wortman J.R."/>
            <person name="Yandell M.D."/>
            <person name="Zhang Q."/>
            <person name="Chen L.X."/>
            <person name="Brandon R.C."/>
            <person name="Rogers Y.-H.C."/>
            <person name="Blazej R.G."/>
            <person name="Champe M."/>
            <person name="Pfeiffer B.D."/>
            <person name="Wan K.H."/>
            <person name="Doyle C."/>
            <person name="Baxter E.G."/>
            <person name="Helt G."/>
            <person name="Nelson C.R."/>
            <person name="Miklos G.L.G."/>
            <person name="Abril J.F."/>
            <person name="Agbayani A."/>
            <person name="An H.-J."/>
            <person name="Andrews-Pfannkoch C."/>
            <person name="Baldwin D."/>
            <person name="Ballew R.M."/>
            <person name="Basu A."/>
            <person name="Baxendale J."/>
            <person name="Bayraktaroglu L."/>
            <person name="Beasley E.M."/>
            <person name="Beeson K.Y."/>
            <person name="Benos P.V."/>
            <person name="Berman B.P."/>
            <person name="Bhandari D."/>
            <person name="Bolshakov S."/>
            <person name="Borkova D."/>
            <person name="Botchan M.R."/>
            <person name="Bouck J."/>
            <person name="Brokstein P."/>
            <person name="Brottier P."/>
            <person name="Burtis K.C."/>
            <person name="Busam D.A."/>
            <person name="Butler H."/>
            <person name="Cadieu E."/>
            <person name="Center A."/>
            <person name="Chandra I."/>
            <person name="Cherry J.M."/>
            <person name="Cawley S."/>
            <person name="Dahlke C."/>
            <person name="Davenport L.B."/>
            <person name="Davies P."/>
            <person name="de Pablos B."/>
            <person name="Delcher A."/>
            <person name="Deng Z."/>
            <person name="Mays A.D."/>
            <person name="Dew I."/>
            <person name="Dietz S.M."/>
            <person name="Dodson K."/>
            <person name="Doup L.E."/>
            <person name="Downes M."/>
            <person name="Dugan-Rocha S."/>
            <person name="Dunkov B.C."/>
            <person name="Dunn P."/>
            <person name="Durbin K.J."/>
            <person name="Evangelista C.C."/>
            <person name="Ferraz C."/>
            <person name="Ferriera S."/>
            <person name="Fleischmann W."/>
            <person name="Fosler C."/>
            <person name="Gabrielian A.E."/>
            <person name="Garg N.S."/>
            <person name="Gelbart W.M."/>
            <person name="Glasser K."/>
            <person name="Glodek A."/>
            <person name="Gong F."/>
            <person name="Gorrell J.H."/>
            <person name="Gu Z."/>
            <person name="Guan P."/>
            <person name="Harris M."/>
            <person name="Harris N.L."/>
            <person name="Harvey D.A."/>
            <person name="Heiman T.J."/>
            <person name="Hernandez J.R."/>
            <person name="Houck J."/>
            <person name="Hostin D."/>
            <person name="Houston K.A."/>
            <person name="Howland T.J."/>
            <person name="Wei M.-H."/>
            <person name="Ibegwam C."/>
            <person name="Jalali M."/>
            <person name="Kalush F."/>
            <person name="Karpen G.H."/>
            <person name="Ke Z."/>
            <person name="Kennison J.A."/>
            <person name="Ketchum K.A."/>
            <person name="Kimmel B.E."/>
            <person name="Kodira C.D."/>
            <person name="Kraft C.L."/>
            <person name="Kravitz S."/>
            <person name="Kulp D."/>
            <person name="Lai Z."/>
            <person name="Lasko P."/>
            <person name="Lei Y."/>
            <person name="Levitsky A.A."/>
            <person name="Li J.H."/>
            <person name="Li Z."/>
            <person name="Liang Y."/>
            <person name="Lin X."/>
            <person name="Liu X."/>
            <person name="Mattei B."/>
            <person name="McIntosh T.C."/>
            <person name="McLeod M.P."/>
            <person name="McPherson D."/>
            <person name="Merkulov G."/>
            <person name="Milshina N.V."/>
            <person name="Mobarry C."/>
            <person name="Morris J."/>
            <person name="Moshrefi A."/>
            <person name="Mount S.M."/>
            <person name="Moy M."/>
            <person name="Murphy B."/>
            <person name="Murphy L."/>
            <person name="Muzny D.M."/>
            <person name="Nelson D.L."/>
            <person name="Nelson D.R."/>
            <person name="Nelson K.A."/>
            <person name="Nixon K."/>
            <person name="Nusskern D.R."/>
            <person name="Pacleb J.M."/>
            <person name="Palazzolo M."/>
            <person name="Pittman G.S."/>
            <person name="Pan S."/>
            <person name="Pollard J."/>
            <person name="Puri V."/>
            <person name="Reese M.G."/>
            <person name="Reinert K."/>
            <person name="Remington K."/>
            <person name="Saunders R.D.C."/>
            <person name="Scheeler F."/>
            <person name="Shen H."/>
            <person name="Shue B.C."/>
            <person name="Siden-Kiamos I."/>
            <person name="Simpson M."/>
            <person name="Skupski M.P."/>
            <person name="Smith T.J."/>
            <person name="Spier E."/>
            <person name="Spradling A.C."/>
            <person name="Stapleton M."/>
            <person name="Strong R."/>
            <person name="Sun E."/>
            <person name="Svirskas R."/>
            <person name="Tector C."/>
            <person name="Turner R."/>
            <person name="Venter E."/>
            <person name="Wang A.H."/>
            <person name="Wang X."/>
            <person name="Wang Z.-Y."/>
            <person name="Wassarman D.A."/>
            <person name="Weinstock G.M."/>
            <person name="Weissenbach J."/>
            <person name="Williams S.M."/>
            <person name="Woodage T."/>
            <person name="Worley K.C."/>
            <person name="Wu D."/>
            <person name="Yang S."/>
            <person name="Yao Q.A."/>
            <person name="Ye J."/>
            <person name="Yeh R.-F."/>
            <person name="Zaveri J.S."/>
            <person name="Zhan M."/>
            <person name="Zhang G."/>
            <person name="Zhao Q."/>
            <person name="Zheng L."/>
            <person name="Zheng X.H."/>
            <person name="Zhong F.N."/>
            <person name="Zhong W."/>
            <person name="Zhou X."/>
            <person name="Zhu S.C."/>
            <person name="Zhu X."/>
            <person name="Smith H.O."/>
            <person name="Gibbs R.A."/>
            <person name="Myers E.W."/>
            <person name="Rubin G.M."/>
            <person name="Venter J.C."/>
        </authorList>
    </citation>
    <scope>NUCLEOTIDE SEQUENCE [LARGE SCALE GENOMIC DNA]</scope>
    <source>
        <strain evidence="12">Berkeley</strain>
    </source>
</reference>
<reference evidence="12" key="2">
    <citation type="journal article" date="2002" name="Genome Biol.">
        <title>Annotation of the Drosophila melanogaster euchromatic genome: a systematic review.</title>
        <authorList>
            <person name="Misra S."/>
            <person name="Crosby M.A."/>
            <person name="Mungall C.J."/>
            <person name="Matthews B.B."/>
            <person name="Campbell K.S."/>
            <person name="Hradecky P."/>
            <person name="Huang Y."/>
            <person name="Kaminker J.S."/>
            <person name="Millburn G.H."/>
            <person name="Prochnik S.E."/>
            <person name="Smith C.D."/>
            <person name="Tupy J.L."/>
            <person name="Whitfield E.J."/>
            <person name="Bayraktaroglu L."/>
            <person name="Berman B.P."/>
            <person name="Bettencourt B.R."/>
            <person name="Celniker S.E."/>
            <person name="de Grey A.D.N.J."/>
            <person name="Drysdale R.A."/>
            <person name="Harris N.L."/>
            <person name="Richter J."/>
            <person name="Russo S."/>
            <person name="Schroeder A.J."/>
            <person name="Shu S.Q."/>
            <person name="Stapleton M."/>
            <person name="Yamada C."/>
            <person name="Ashburner M."/>
            <person name="Gelbart W.M."/>
            <person name="Rubin G.M."/>
            <person name="Lewis S.E."/>
        </authorList>
    </citation>
    <scope>GENOME REANNOTATION</scope>
    <source>
        <strain evidence="12">Berkeley</strain>
    </source>
</reference>
<reference evidence="9 10" key="3">
    <citation type="submission" date="2004-10" db="EMBL/GenBank/DDBJ databases">
        <authorList>
            <person name="Stapleton M."/>
            <person name="Carlson J."/>
            <person name="Chavez C."/>
            <person name="Frise E."/>
            <person name="George R."/>
            <person name="Pacleb J."/>
            <person name="Park S."/>
            <person name="Wan K."/>
            <person name="Yu C."/>
            <person name="Rubin G.M."/>
            <person name="Celniker S."/>
        </authorList>
    </citation>
    <scope>NUCLEOTIDE SEQUENCE [LARGE SCALE MRNA] (ISOFORM A)</scope>
    <scope>NUCLEOTIDE SEQUENCE [LARGE SCALE MRNA]</scope>
    <source>
        <strain evidence="9 10">Berkeley</strain>
    </source>
</reference>
<reference evidence="8" key="4">
    <citation type="journal article" date="2007" name="Biochemistry">
        <title>Isolation and characterization of glutaminyl cyclases from Drosophila: evidence for enzyme forms with different subcellular localization.</title>
        <authorList>
            <person name="Schilling S."/>
            <person name="Lindner C."/>
            <person name="Koch B."/>
            <person name="Wermann M."/>
            <person name="Rahfeld J.U."/>
            <person name="von Bohlen A."/>
            <person name="Rudolph T."/>
            <person name="Reuter G."/>
            <person name="Demuth H.U."/>
        </authorList>
    </citation>
    <scope>FUNCTION</scope>
    <scope>CATALYTIC ACTIVITY</scope>
    <scope>ACTIVITY REGULATION</scope>
    <scope>BIOPHYSICOCHEMICAL PROPERTIES</scope>
    <scope>SUBCELLULAR LOCATION</scope>
</reference>
<reference evidence="13 14" key="5">
    <citation type="journal article" date="2012" name="Biochemistry">
        <title>Crystal structures of glutaminyl cyclases (QCs) from Drosophila melanogaster reveal active site conservation between insect and mammalian QCs.</title>
        <authorList>
            <person name="Koch B."/>
            <person name="Kolenko P."/>
            <person name="Buchholz M."/>
            <person name="Carrillo D.R."/>
            <person name="Parthier C."/>
            <person name="Wermann M."/>
            <person name="Rahfeld J.U."/>
            <person name="Reuter G."/>
            <person name="Schilling S."/>
            <person name="Stubbs M.T."/>
            <person name="Demuth H.U."/>
        </authorList>
    </citation>
    <scope>X-RAY CRYSTALLOGRAPHY (1.65 ANGSTROMS) OF 32-354 WILD TYPE (ISOFORM B) AND OF 32-354 MUTANT ALA-136 AND ALA-158 (ISOFORM B) IN COMPLEX WITH ZINC AND INHIBITOR</scope>
    <scope>FUNCTION</scope>
    <scope>CATALYTIC ACTIVITY</scope>
    <scope>ACTIVITY REGULATION</scope>
    <scope>BIOPHYSICOCHEMICAL PROPERTIES</scope>
    <scope>MUTAGENESIS OF CYS-136 AND CYS-158</scope>
</reference>
<sequence length="354" mass="40838">MRLLLRNYSLMEAVKRLLPRPRKKIYNLGACFELVDIPKISYNPSELSEPRFLEYSNLSDKLHLREAIDKILIPRVVGTTNHSIVREYIVQSLRDLDWDVEVNSFHDHAPIKGKLHFHNIIATLNPNAERYLVLSCHYDSKYMPGVEFLGATDSAVPCAMLLNLAQVLQEQLKPLKKSKLSLMLLFFDGEEAFEEWGPKDSIYGARHLAKKWHHEGKLDRIDMLVLLDLLGAPDPAFYSFFENTESWYMRIQSVETRLAKLQLLERYASSGVAQRDPTRYFQSQAMRSSFIEDDHIPFLRRNVPILHLIPVPFPSVWHTPDDNASVIDYATTDNLALIIRLFALEYLLAGTEAK</sequence>
<accession>Q86PD7</accession>
<accession>Q7KTY3</accession>
<dbReference type="EC" id="2.3.2.5" evidence="4 5"/>
<dbReference type="EMBL" id="AE014296">
    <property type="protein sequence ID" value="AAF51610.2"/>
    <property type="molecule type" value="Genomic_DNA"/>
</dbReference>
<dbReference type="EMBL" id="AE014296">
    <property type="protein sequence ID" value="AAO41279.1"/>
    <property type="molecule type" value="Genomic_DNA"/>
</dbReference>
<dbReference type="EMBL" id="BT003189">
    <property type="protein sequence ID" value="AAO24944.1"/>
    <property type="molecule type" value="mRNA"/>
</dbReference>
<dbReference type="EMBL" id="BT016015">
    <property type="protein sequence ID" value="AAV36900.1"/>
    <property type="molecule type" value="mRNA"/>
</dbReference>
<dbReference type="RefSeq" id="NP_788550.1">
    <molecule id="Q86PD7-1"/>
    <property type="nucleotide sequence ID" value="NM_176372.2"/>
</dbReference>
<dbReference type="RefSeq" id="NP_788551.1">
    <molecule id="Q86PD7-2"/>
    <property type="nucleotide sequence ID" value="NM_176373.3"/>
</dbReference>
<dbReference type="PDB" id="4FAI">
    <property type="method" value="X-ray"/>
    <property type="resolution" value="1.65 A"/>
    <property type="chains" value="A/B=32-354"/>
</dbReference>
<dbReference type="PDB" id="4FBE">
    <property type="method" value="X-ray"/>
    <property type="resolution" value="1.88 A"/>
    <property type="chains" value="A/B=32-354"/>
</dbReference>
<dbReference type="PDBsum" id="4FAI"/>
<dbReference type="PDBsum" id="4FBE"/>
<dbReference type="SMR" id="Q86PD7"/>
<dbReference type="FunCoup" id="Q86PD7">
    <property type="interactions" value="570"/>
</dbReference>
<dbReference type="IntAct" id="Q86PD7">
    <property type="interactions" value="21"/>
</dbReference>
<dbReference type="STRING" id="7227.FBpp0077857"/>
<dbReference type="MEROPS" id="M28.016"/>
<dbReference type="PaxDb" id="7227-FBpp0077857"/>
<dbReference type="DNASU" id="40270"/>
<dbReference type="EnsemblMetazoa" id="FBtr0078199">
    <molecule id="Q86PD7-1"/>
    <property type="protein sequence ID" value="FBpp0077857"/>
    <property type="gene ID" value="FBgn0036999"/>
</dbReference>
<dbReference type="EnsemblMetazoa" id="FBtr0078200">
    <molecule id="Q86PD7-2"/>
    <property type="protein sequence ID" value="FBpp0077858"/>
    <property type="gene ID" value="FBgn0036999"/>
</dbReference>
<dbReference type="GeneID" id="40270"/>
<dbReference type="KEGG" id="dme:Dmel_CG5976"/>
<dbReference type="UCSC" id="CG5976-RB">
    <molecule id="Q86PD7-1"/>
    <property type="organism name" value="d. melanogaster"/>
</dbReference>
<dbReference type="AGR" id="FB:FBgn0036999"/>
<dbReference type="CTD" id="40270"/>
<dbReference type="FlyBase" id="FBgn0036999">
    <property type="gene designation" value="isoQC"/>
</dbReference>
<dbReference type="VEuPathDB" id="VectorBase:FBgn0036999"/>
<dbReference type="eggNOG" id="KOG3946">
    <property type="taxonomic scope" value="Eukaryota"/>
</dbReference>
<dbReference type="GeneTree" id="ENSGT00390000003107"/>
<dbReference type="HOGENOM" id="CLU_045003_1_0_1"/>
<dbReference type="InParanoid" id="Q86PD7"/>
<dbReference type="OMA" id="THWAYQK"/>
<dbReference type="OrthoDB" id="3907302at2759"/>
<dbReference type="BRENDA" id="2.3.2.5">
    <property type="organism ID" value="1994"/>
</dbReference>
<dbReference type="Reactome" id="R-DME-6798695">
    <property type="pathway name" value="Neutrophil degranulation"/>
</dbReference>
<dbReference type="BioGRID-ORCS" id="40270">
    <property type="hits" value="0 hits in 3 CRISPR screens"/>
</dbReference>
<dbReference type="ChiTaRS" id="isoQC">
    <property type="organism name" value="fly"/>
</dbReference>
<dbReference type="EvolutionaryTrace" id="Q86PD7"/>
<dbReference type="GenomeRNAi" id="40270"/>
<dbReference type="PRO" id="PR:Q86PD7"/>
<dbReference type="Proteomes" id="UP000000803">
    <property type="component" value="Chromosome 3L"/>
</dbReference>
<dbReference type="Bgee" id="FBgn0036999">
    <property type="expression patterns" value="Expressed in saliva-secreting gland and 51 other cell types or tissues"/>
</dbReference>
<dbReference type="ExpressionAtlas" id="Q86PD7">
    <property type="expression patterns" value="baseline and differential"/>
</dbReference>
<dbReference type="GO" id="GO:0005576">
    <property type="term" value="C:extracellular region"/>
    <property type="evidence" value="ECO:0000314"/>
    <property type="project" value="FlyBase"/>
</dbReference>
<dbReference type="GO" id="GO:0005739">
    <property type="term" value="C:mitochondrion"/>
    <property type="evidence" value="ECO:0000314"/>
    <property type="project" value="FlyBase"/>
</dbReference>
<dbReference type="GO" id="GO:0016603">
    <property type="term" value="F:glutaminyl-peptide cyclotransferase activity"/>
    <property type="evidence" value="ECO:0000314"/>
    <property type="project" value="FlyBase"/>
</dbReference>
<dbReference type="GO" id="GO:0008270">
    <property type="term" value="F:zinc ion binding"/>
    <property type="evidence" value="ECO:0000318"/>
    <property type="project" value="GO_Central"/>
</dbReference>
<dbReference type="CDD" id="cd03880">
    <property type="entry name" value="M28_QC_like"/>
    <property type="match status" value="1"/>
</dbReference>
<dbReference type="FunFam" id="3.40.630.10:FF:000029">
    <property type="entry name" value="Glutaminyl-peptide cyclotransferase"/>
    <property type="match status" value="1"/>
</dbReference>
<dbReference type="Gene3D" id="3.40.630.10">
    <property type="entry name" value="Zn peptidases"/>
    <property type="match status" value="1"/>
</dbReference>
<dbReference type="InterPro" id="IPR037457">
    <property type="entry name" value="M28_QC"/>
</dbReference>
<dbReference type="InterPro" id="IPR007484">
    <property type="entry name" value="Peptidase_M28"/>
</dbReference>
<dbReference type="InterPro" id="IPR040234">
    <property type="entry name" value="QC/QCL"/>
</dbReference>
<dbReference type="PANTHER" id="PTHR12283">
    <property type="entry name" value="GLUTAMINYL-PEPTIDE CYCLOTRANSFERASE"/>
    <property type="match status" value="1"/>
</dbReference>
<dbReference type="PANTHER" id="PTHR12283:SF6">
    <property type="entry name" value="GLUTAMINYL-PEPTIDE CYCLOTRANSFERASE-RELATED"/>
    <property type="match status" value="1"/>
</dbReference>
<dbReference type="Pfam" id="PF04389">
    <property type="entry name" value="Peptidase_M28"/>
    <property type="match status" value="1"/>
</dbReference>
<dbReference type="SUPFAM" id="SSF53187">
    <property type="entry name" value="Zn-dependent exopeptidases"/>
    <property type="match status" value="1"/>
</dbReference>
<evidence type="ECO:0000250" key="1">
    <source>
        <dbReference type="UniProtKB" id="B7QK46"/>
    </source>
</evidence>
<evidence type="ECO:0000250" key="2">
    <source>
        <dbReference type="UniProtKB" id="Q16769"/>
    </source>
</evidence>
<evidence type="ECO:0000255" key="3"/>
<evidence type="ECO:0000269" key="4">
    <source>
    </source>
</evidence>
<evidence type="ECO:0000269" key="5">
    <source>
    </source>
</evidence>
<evidence type="ECO:0000269" key="6">
    <source ref="3"/>
</evidence>
<evidence type="ECO:0000303" key="7">
    <source>
    </source>
</evidence>
<evidence type="ECO:0000305" key="8"/>
<evidence type="ECO:0000312" key="9">
    <source>
        <dbReference type="EMBL" id="AAO24944.1"/>
    </source>
</evidence>
<evidence type="ECO:0000312" key="10">
    <source>
        <dbReference type="EMBL" id="AAV36900.1"/>
    </source>
</evidence>
<evidence type="ECO:0000312" key="11">
    <source>
        <dbReference type="FlyBase" id="FBgn0036999"/>
    </source>
</evidence>
<evidence type="ECO:0000312" key="12">
    <source>
        <dbReference type="Proteomes" id="UP000000803"/>
    </source>
</evidence>
<evidence type="ECO:0007744" key="13">
    <source>
        <dbReference type="PDB" id="4FAI"/>
    </source>
</evidence>
<evidence type="ECO:0007744" key="14">
    <source>
        <dbReference type="PDB" id="4FBE"/>
    </source>
</evidence>
<evidence type="ECO:0007829" key="15">
    <source>
        <dbReference type="PDB" id="4FAI"/>
    </source>
</evidence>
<feature type="transit peptide" description="Mitochondrion" evidence="3">
    <location>
        <begin position="1"/>
        <end position="8"/>
    </location>
</feature>
<feature type="chain" id="PRO_0000457324" description="Glutaminyl-peptide cyclotransferase" evidence="3">
    <location>
        <begin position="9"/>
        <end position="354"/>
    </location>
</feature>
<feature type="active site" description="Proton acceptor" evidence="2">
    <location>
        <position position="190"/>
    </location>
</feature>
<feature type="active site" description="Proton acceptor" evidence="2">
    <location>
        <position position="228"/>
    </location>
</feature>
<feature type="binding site" evidence="5 13 14">
    <location>
        <position position="153"/>
    </location>
    <ligand>
        <name>Zn(2+)</name>
        <dbReference type="ChEBI" id="CHEBI:29105"/>
    </ligand>
</feature>
<feature type="binding site" evidence="5 13 14">
    <location>
        <position position="191"/>
    </location>
    <ligand>
        <name>Zn(2+)</name>
        <dbReference type="ChEBI" id="CHEBI:29105"/>
    </ligand>
</feature>
<feature type="binding site" evidence="5 13 14">
    <location>
        <position position="318"/>
    </location>
    <ligand>
        <name>Zn(2+)</name>
        <dbReference type="ChEBI" id="CHEBI:29105"/>
    </ligand>
</feature>
<feature type="disulfide bond" evidence="2">
    <location>
        <begin position="136"/>
        <end position="158"/>
    </location>
</feature>
<feature type="splice variant" id="VSP_061767" description="In isoform A." evidence="6">
    <original>MRLLLRNYSLMEAVKRLLPRPRKKIYNLGACFELVDIPK</original>
    <variation>MLHRTARMWTLCVQTALIATLVRGSTSQKDNLVGRTQ</variation>
    <location>
        <begin position="1"/>
        <end position="39"/>
    </location>
</feature>
<feature type="mutagenesis site" description="Does not affect catalysis, inhibitor binding or protein folding; when associated with A-158." evidence="5">
    <original>C</original>
    <variation>A</variation>
    <location>
        <position position="136"/>
    </location>
</feature>
<feature type="mutagenesis site" description="Does not affect catalysis, inhibitor binding or protein folding; when associated with A-136." evidence="5">
    <original>C</original>
    <variation>A</variation>
    <location>
        <position position="158"/>
    </location>
</feature>
<feature type="strand" evidence="15">
    <location>
        <begin position="34"/>
        <end position="36"/>
    </location>
</feature>
<feature type="helix" evidence="15">
    <location>
        <begin position="39"/>
        <end position="41"/>
    </location>
</feature>
<feature type="helix" evidence="15">
    <location>
        <begin position="49"/>
        <end position="56"/>
    </location>
</feature>
<feature type="helix" evidence="15">
    <location>
        <begin position="61"/>
        <end position="71"/>
    </location>
</feature>
<feature type="helix" evidence="15">
    <location>
        <begin position="80"/>
        <end position="95"/>
    </location>
</feature>
<feature type="strand" evidence="15">
    <location>
        <begin position="99"/>
        <end position="109"/>
    </location>
</feature>
<feature type="turn" evidence="15">
    <location>
        <begin position="110"/>
        <end position="112"/>
    </location>
</feature>
<feature type="strand" evidence="15">
    <location>
        <begin position="113"/>
        <end position="124"/>
    </location>
</feature>
<feature type="strand" evidence="15">
    <location>
        <begin position="129"/>
        <end position="137"/>
    </location>
</feature>
<feature type="turn" evidence="15">
    <location>
        <begin position="151"/>
        <end position="154"/>
    </location>
</feature>
<feature type="helix" evidence="15">
    <location>
        <begin position="155"/>
        <end position="167"/>
    </location>
</feature>
<feature type="helix" evidence="15">
    <location>
        <begin position="169"/>
        <end position="172"/>
    </location>
</feature>
<feature type="helix" evidence="15">
    <location>
        <begin position="173"/>
        <end position="176"/>
    </location>
</feature>
<feature type="strand" evidence="15">
    <location>
        <begin position="178"/>
        <end position="188"/>
    </location>
</feature>
<feature type="strand" evidence="15">
    <location>
        <begin position="193"/>
        <end position="195"/>
    </location>
</feature>
<feature type="helix" evidence="15">
    <location>
        <begin position="203"/>
        <end position="214"/>
    </location>
</feature>
<feature type="strand" evidence="15">
    <location>
        <begin position="221"/>
        <end position="227"/>
    </location>
</feature>
<feature type="strand" evidence="15">
    <location>
        <begin position="231"/>
        <end position="234"/>
    </location>
</feature>
<feature type="strand" evidence="15">
    <location>
        <begin position="237"/>
        <end position="239"/>
    </location>
</feature>
<feature type="helix" evidence="15">
    <location>
        <begin position="242"/>
        <end position="244"/>
    </location>
</feature>
<feature type="helix" evidence="15">
    <location>
        <begin position="245"/>
        <end position="260"/>
    </location>
</feature>
<feature type="strand" evidence="15">
    <location>
        <begin position="281"/>
        <end position="286"/>
    </location>
</feature>
<feature type="helix" evidence="15">
    <location>
        <begin position="296"/>
        <end position="299"/>
    </location>
</feature>
<feature type="turn" evidence="15">
    <location>
        <begin position="300"/>
        <end position="302"/>
    </location>
</feature>
<feature type="strand" evidence="15">
    <location>
        <begin position="305"/>
        <end position="308"/>
    </location>
</feature>
<feature type="turn" evidence="15">
    <location>
        <begin position="315"/>
        <end position="318"/>
    </location>
</feature>
<feature type="helix" evidence="15">
    <location>
        <begin position="324"/>
        <end position="326"/>
    </location>
</feature>
<feature type="helix" evidence="15">
    <location>
        <begin position="329"/>
        <end position="347"/>
    </location>
</feature>
<gene>
    <name evidence="11" type="primary">isoQC</name>
    <name evidence="11" type="synonym">CG32426</name>
    <name evidence="11" type="ORF">CG5976</name>
</gene>
<comment type="function">
    <text evidence="2 4 5">Acts as a glutaminyl-peptide cyclotransferase (PubMed:17722885, PubMed:22897232). Responsible for the biosynthesis of pyroglutamyl peptides (By similarity). Might be more efficient in the conversion of tri and tetrapeptides in vitro (PubMed:17722885). Might have a relative preference for substrates containing hydrophobic amino acids in vitro (PubMed:17722885).</text>
</comment>
<comment type="catalytic activity">
    <reaction evidence="4 5">
        <text>N-terminal L-glutaminyl-[peptide] = N-terminal 5-oxo-L-prolyl-[peptide] + NH4(+)</text>
        <dbReference type="Rhea" id="RHEA:23652"/>
        <dbReference type="Rhea" id="RHEA-COMP:11736"/>
        <dbReference type="Rhea" id="RHEA-COMP:11846"/>
        <dbReference type="ChEBI" id="CHEBI:28938"/>
        <dbReference type="ChEBI" id="CHEBI:64722"/>
        <dbReference type="ChEBI" id="CHEBI:87215"/>
        <dbReference type="EC" id="2.3.2.5"/>
    </reaction>
</comment>
<comment type="activity regulation">
    <text evidence="4 5">Inhibited by imidazoles (imidazole, benzimidazole, 1-benzylimidazole, 1-methylimidazole, P150/03 and N-omega-acetylhistamine) and cysteamines (cysteamine and N-dimethylcysteamine) (PubMed:17722885, PubMed:22897232). Inhibited by PDB50 1(3,4-dimethoxyphenyl)-3-(3-imidazol-1-ylpropyl)thiourea (PubMed:22897232).</text>
</comment>
<comment type="biophysicochemical properties">
    <kinetics>
        <KM evidence="4">2.4 mM for H-Gln-Gly-OH (at 30 degrees Celsius)</KM>
        <KM evidence="4">2.8 mM for H-Gln-Ala-OH (at 30 degrees Celsius)</KM>
        <KM evidence="4">0.94 mM for H-Gln-Gln-OH (at 30 degrees Celsius)</KM>
        <KM evidence="4">1.17 mM for H-Gln-Gly-Pro-OH (at 30 degrees Celsius)</KM>
        <KM evidence="4">0.72 mM for H-Gln-Tyr-Ala-OH (at 30 degrees Celsius)</KM>
        <KM evidence="4">0.128 mM for H-Gln-Phe-Ala-OH (at 30 degrees Celsius)</KM>
        <KM evidence="4">0.1293 mM for H-Gln-Val-Ala-OH (at 30 degrees Celsius)</KM>
        <KM evidence="4">0.68 mM for H-Gln-Glu-Ala-Phe-NH2 (at 30 degrees Celsius)</KM>
        <text evidence="4">kcat is 4.9 sec(-1) with H-Gln-Gly-OH as substrate (at 30 degrees Celsius). kcat is 16 sec(-1) with H-Gln-Ala-OH as substrate (at 30 degrees Celsius). kcat is 7.4 sec(-1) with Gln-Gln-OH as substrate (at 30 degrees Celsius). kcat is 14 sec(-1) with H-Gln-Gly-Pro-OH as substrate (at 30 degrees Celsius). kcat is 17.04 sec(-1) with H-Gln-Tyr-Ala-OH as substracte (at 30 degrees Celsius). kcat is 16 sec(-1) with H-Gln-Phe-Ala-OH as substrate (at 30 degrees Celsius). kcat is 3.02 sec(-1) with H-Gln-Val-Ala-OH as substrate (at 30 degrees Celsius). kcat is 11 sec(-1) with H-Gln-Glu-Ala-Phe-NH2 as substrate (at 30 degrees Celsius).</text>
    </kinetics>
    <phDependence>
        <text evidence="4 5">Optimum pH is between 7.5 and 8.</text>
    </phDependence>
</comment>
<comment type="subcellular location">
    <molecule>Isoform A</molecule>
    <subcellularLocation>
        <location evidence="4">Secreted</location>
    </subcellularLocation>
</comment>
<comment type="subcellular location">
    <molecule>Isoform B</molecule>
    <subcellularLocation>
        <location evidence="4">Mitochondrion</location>
    </subcellularLocation>
</comment>
<comment type="alternative products">
    <event type="alternative splicing"/>
    <isoform>
        <id>Q86PD7-1</id>
        <name evidence="11">B</name>
        <sequence type="displayed"/>
    </isoform>
    <isoform>
        <id>Q86PD7-2</id>
        <name evidence="11">A</name>
        <sequence type="described" ref="VSP_061767"/>
    </isoform>
</comment>
<comment type="similarity">
    <text evidence="8">Belongs to the glutaminyl-peptide cyclotransferase family.</text>
</comment>
<comment type="caution">
    <text evidence="1">It is unclear whether this protein requires a metal cofactor for catalysis. It was originally proposed to be a Zn(2+)-dependent metalloenzyme based on structural similarities to bacterial aminopeptidases and the observation that it can bind Zn(2+) ions, typically in a 1:1 stoichiometry. However, a recent study suggests a Zn(2+)-independent catalytic mechanism.</text>
</comment>